<evidence type="ECO:0000250" key="1">
    <source>
        <dbReference type="UniProtKB" id="A4Q9E8"/>
    </source>
</evidence>
<evidence type="ECO:0000250" key="2">
    <source>
        <dbReference type="UniProtKB" id="O95922"/>
    </source>
</evidence>
<evidence type="ECO:0000250" key="3">
    <source>
        <dbReference type="UniProtKB" id="Q91V51"/>
    </source>
</evidence>
<evidence type="ECO:0000255" key="4">
    <source>
        <dbReference type="PROSITE-ProRule" id="PRU00568"/>
    </source>
</evidence>
<evidence type="ECO:0000256" key="5">
    <source>
        <dbReference type="SAM" id="MobiDB-lite"/>
    </source>
</evidence>
<evidence type="ECO:0000305" key="6"/>
<reference key="1">
    <citation type="submission" date="2006-08" db="EMBL/GenBank/DDBJ databases">
        <authorList>
            <consortium name="NIH - Mammalian Gene Collection (MGC) project"/>
        </authorList>
    </citation>
    <scope>NUCLEOTIDE SEQUENCE [LARGE SCALE MRNA]</scope>
    <source>
        <strain>Hereford</strain>
        <tissue>Hippocampus</tissue>
    </source>
</reference>
<organism>
    <name type="scientific">Bos taurus</name>
    <name type="common">Bovine</name>
    <dbReference type="NCBI Taxonomy" id="9913"/>
    <lineage>
        <taxon>Eukaryota</taxon>
        <taxon>Metazoa</taxon>
        <taxon>Chordata</taxon>
        <taxon>Craniata</taxon>
        <taxon>Vertebrata</taxon>
        <taxon>Euteleostomi</taxon>
        <taxon>Mammalia</taxon>
        <taxon>Eutheria</taxon>
        <taxon>Laurasiatheria</taxon>
        <taxon>Artiodactyla</taxon>
        <taxon>Ruminantia</taxon>
        <taxon>Pecora</taxon>
        <taxon>Bovidae</taxon>
        <taxon>Bovinae</taxon>
        <taxon>Bos</taxon>
    </lineage>
</organism>
<protein>
    <recommendedName>
        <fullName evidence="3">Polyglutamylase complex subunit TTLL1</fullName>
        <ecNumber evidence="3">6.3.2.-</ecNumber>
    </recommendedName>
    <alternativeName>
        <fullName>Tubulin polyglutamylase TTLL1</fullName>
    </alternativeName>
    <alternativeName>
        <fullName>Tubulin polyglutamylase complex subunit 3</fullName>
        <shortName evidence="3">PGs3</shortName>
    </alternativeName>
    <alternativeName>
        <fullName evidence="3">Tubulin--tyrosine ligase-like protein 1</fullName>
    </alternativeName>
</protein>
<name>TTLL1_BOVIN</name>
<accession>Q0VC71</accession>
<feature type="chain" id="PRO_0000288848" description="Polyglutamylase complex subunit TTLL1">
    <location>
        <begin position="1"/>
        <end position="423"/>
    </location>
</feature>
<feature type="domain" description="TTL" evidence="4">
    <location>
        <begin position="1"/>
        <end position="367"/>
    </location>
</feature>
<feature type="region of interest" description="Disordered" evidence="5">
    <location>
        <begin position="391"/>
        <end position="423"/>
    </location>
</feature>
<feature type="binding site" evidence="1">
    <location>
        <position position="138"/>
    </location>
    <ligand>
        <name>ATP</name>
        <dbReference type="ChEBI" id="CHEBI:30616"/>
    </ligand>
</feature>
<feature type="binding site" evidence="1">
    <location>
        <begin position="144"/>
        <end position="145"/>
    </location>
    <ligand>
        <name>ATP</name>
        <dbReference type="ChEBI" id="CHEBI:30616"/>
    </ligand>
</feature>
<feature type="binding site" evidence="1">
    <location>
        <position position="144"/>
    </location>
    <ligand>
        <name>a protein</name>
        <dbReference type="ChEBI" id="CHEBI:16541"/>
    </ligand>
    <ligandPart>
        <name>L-glutamate residue</name>
        <dbReference type="ChEBI" id="CHEBI:29973"/>
        <note>L-glutamate acceptor residue in protein target</note>
    </ligandPart>
</feature>
<feature type="binding site" evidence="1">
    <location>
        <begin position="181"/>
        <end position="184"/>
    </location>
    <ligand>
        <name>ATP</name>
        <dbReference type="ChEBI" id="CHEBI:30616"/>
    </ligand>
</feature>
<feature type="binding site" evidence="1">
    <location>
        <begin position="194"/>
        <end position="196"/>
    </location>
    <ligand>
        <name>ATP</name>
        <dbReference type="ChEBI" id="CHEBI:30616"/>
    </ligand>
</feature>
<feature type="binding site" evidence="1">
    <location>
        <position position="220"/>
    </location>
    <ligand>
        <name>L-glutamate</name>
        <dbReference type="ChEBI" id="CHEBI:29985"/>
    </ligand>
</feature>
<feature type="binding site" evidence="1">
    <location>
        <begin position="241"/>
        <end position="242"/>
    </location>
    <ligand>
        <name>ATP</name>
        <dbReference type="ChEBI" id="CHEBI:30616"/>
    </ligand>
</feature>
<feature type="binding site" evidence="1">
    <location>
        <position position="259"/>
    </location>
    <ligand>
        <name>L-glutamate</name>
        <dbReference type="ChEBI" id="CHEBI:29985"/>
    </ligand>
</feature>
<feature type="binding site" evidence="1">
    <location>
        <position position="313"/>
    </location>
    <ligand>
        <name>Mg(2+)</name>
        <dbReference type="ChEBI" id="CHEBI:18420"/>
        <label>1</label>
    </ligand>
</feature>
<feature type="binding site" evidence="1">
    <location>
        <position position="326"/>
    </location>
    <ligand>
        <name>Mg(2+)</name>
        <dbReference type="ChEBI" id="CHEBI:18420"/>
        <label>1</label>
    </ligand>
</feature>
<feature type="binding site" evidence="1">
    <location>
        <position position="326"/>
    </location>
    <ligand>
        <name>Mg(2+)</name>
        <dbReference type="ChEBI" id="CHEBI:18420"/>
        <label>2</label>
    </ligand>
</feature>
<feature type="binding site" evidence="1">
    <location>
        <position position="328"/>
    </location>
    <ligand>
        <name>Mg(2+)</name>
        <dbReference type="ChEBI" id="CHEBI:18420"/>
        <label>2</label>
    </ligand>
</feature>
<feature type="binding site" evidence="1">
    <location>
        <position position="344"/>
    </location>
    <ligand>
        <name>L-glutamate</name>
        <dbReference type="ChEBI" id="CHEBI:29985"/>
    </ligand>
</feature>
<feature type="site" description="Essential for specifying alpha-elongation versus initiation step of the polyglutamylase activity" evidence="1">
    <location>
        <position position="144"/>
    </location>
</feature>
<proteinExistence type="evidence at transcript level"/>
<dbReference type="EC" id="6.3.2.-" evidence="3"/>
<dbReference type="EMBL" id="BC120322">
    <property type="protein sequence ID" value="AAI20323.1"/>
    <property type="molecule type" value="mRNA"/>
</dbReference>
<dbReference type="RefSeq" id="NP_001069639.1">
    <property type="nucleotide sequence ID" value="NM_001076171.1"/>
</dbReference>
<dbReference type="RefSeq" id="XP_005207474.1">
    <property type="nucleotide sequence ID" value="XM_005207417.5"/>
</dbReference>
<dbReference type="RefSeq" id="XP_005207475.1">
    <property type="nucleotide sequence ID" value="XM_005207418.3"/>
</dbReference>
<dbReference type="SMR" id="Q0VC71"/>
<dbReference type="FunCoup" id="Q0VC71">
    <property type="interactions" value="2004"/>
</dbReference>
<dbReference type="STRING" id="9913.ENSBTAP00000015956"/>
<dbReference type="PaxDb" id="9913-ENSBTAP00000015956"/>
<dbReference type="Ensembl" id="ENSBTAT00000015956.5">
    <property type="protein sequence ID" value="ENSBTAP00000015956.3"/>
    <property type="gene ID" value="ENSBTAG00000012030.5"/>
</dbReference>
<dbReference type="GeneID" id="539530"/>
<dbReference type="KEGG" id="bta:539530"/>
<dbReference type="CTD" id="25809"/>
<dbReference type="VEuPathDB" id="HostDB:ENSBTAG00000012030"/>
<dbReference type="VGNC" id="VGNC:36489">
    <property type="gene designation" value="TTLL1"/>
</dbReference>
<dbReference type="eggNOG" id="KOG2157">
    <property type="taxonomic scope" value="Eukaryota"/>
</dbReference>
<dbReference type="GeneTree" id="ENSGT00940000156720"/>
<dbReference type="HOGENOM" id="CLU_010131_0_0_1"/>
<dbReference type="InParanoid" id="Q0VC71"/>
<dbReference type="OMA" id="DWNFYWS"/>
<dbReference type="OrthoDB" id="202825at2759"/>
<dbReference type="TreeFam" id="TF313087"/>
<dbReference type="Proteomes" id="UP000009136">
    <property type="component" value="Chromosome 5"/>
</dbReference>
<dbReference type="Bgee" id="ENSBTAG00000012030">
    <property type="expression patterns" value="Expressed in Ammon's horn and 103 other cell types or tissues"/>
</dbReference>
<dbReference type="GO" id="GO:0036064">
    <property type="term" value="C:ciliary basal body"/>
    <property type="evidence" value="ECO:0000318"/>
    <property type="project" value="GO_Central"/>
</dbReference>
<dbReference type="GO" id="GO:0005737">
    <property type="term" value="C:cytoplasm"/>
    <property type="evidence" value="ECO:0007669"/>
    <property type="project" value="UniProtKB-KW"/>
</dbReference>
<dbReference type="GO" id="GO:0005874">
    <property type="term" value="C:microtubule"/>
    <property type="evidence" value="ECO:0007669"/>
    <property type="project" value="UniProtKB-KW"/>
</dbReference>
<dbReference type="GO" id="GO:0031514">
    <property type="term" value="C:motile cilium"/>
    <property type="evidence" value="ECO:0007669"/>
    <property type="project" value="UniProtKB-SubCell"/>
</dbReference>
<dbReference type="GO" id="GO:0005524">
    <property type="term" value="F:ATP binding"/>
    <property type="evidence" value="ECO:0007669"/>
    <property type="project" value="UniProtKB-KW"/>
</dbReference>
<dbReference type="GO" id="GO:0046872">
    <property type="term" value="F:metal ion binding"/>
    <property type="evidence" value="ECO:0007669"/>
    <property type="project" value="UniProtKB-KW"/>
</dbReference>
<dbReference type="GO" id="GO:0106438">
    <property type="term" value="F:protein-glutamic acid ligase activity, elongating"/>
    <property type="evidence" value="ECO:0007669"/>
    <property type="project" value="RHEA"/>
</dbReference>
<dbReference type="GO" id="GO:0015631">
    <property type="term" value="F:tubulin binding"/>
    <property type="evidence" value="ECO:0000318"/>
    <property type="project" value="GO_Central"/>
</dbReference>
<dbReference type="GO" id="GO:0070740">
    <property type="term" value="F:tubulin-glutamic acid ligase activity"/>
    <property type="evidence" value="ECO:0000318"/>
    <property type="project" value="GO_Central"/>
</dbReference>
<dbReference type="GO" id="GO:0036211">
    <property type="term" value="P:protein modification process"/>
    <property type="evidence" value="ECO:0007669"/>
    <property type="project" value="InterPro"/>
</dbReference>
<dbReference type="GO" id="GO:0007288">
    <property type="term" value="P:sperm axoneme assembly"/>
    <property type="evidence" value="ECO:0000318"/>
    <property type="project" value="GO_Central"/>
</dbReference>
<dbReference type="FunFam" id="3.30.470.20:FF:000033">
    <property type="entry name" value="Probable tubulin polyglutamylase TTLL1"/>
    <property type="match status" value="1"/>
</dbReference>
<dbReference type="Gene3D" id="3.30.470.20">
    <property type="entry name" value="ATP-grasp fold, B domain"/>
    <property type="match status" value="1"/>
</dbReference>
<dbReference type="InterPro" id="IPR004344">
    <property type="entry name" value="TTL/TTLL_fam"/>
</dbReference>
<dbReference type="PANTHER" id="PTHR12241:SF31">
    <property type="entry name" value="POLYGLUTAMYLASE COMPLEX SUBUNIT TTLL1"/>
    <property type="match status" value="1"/>
</dbReference>
<dbReference type="PANTHER" id="PTHR12241">
    <property type="entry name" value="TUBULIN POLYGLUTAMYLASE"/>
    <property type="match status" value="1"/>
</dbReference>
<dbReference type="Pfam" id="PF03133">
    <property type="entry name" value="TTL"/>
    <property type="match status" value="1"/>
</dbReference>
<dbReference type="SUPFAM" id="SSF56059">
    <property type="entry name" value="Glutathione synthetase ATP-binding domain-like"/>
    <property type="match status" value="1"/>
</dbReference>
<dbReference type="PROSITE" id="PS51221">
    <property type="entry name" value="TTL"/>
    <property type="match status" value="1"/>
</dbReference>
<comment type="function">
    <text evidence="3">Catalytic subunit of a polyglutamylase complex which modifies tubulin, generating side chains of glutamate on the gamma-carboxyl group of specific glutamate residues within the C-terminal tail of tubulin. Probably involved in the side-chain elongation step of the polyglutamylation reaction rather than the initiation step. Modifies both alpha- and beta-tubulins with a preference for the alpha-tail. Unlike most polyglutamylases of the tubulin--tyrosine ligase family, only displays a catalytic activity when in complex with other proteins as it is most likely lacking domains important for autonomous activity. Part of the neuronal tubulin polyglutamylase complex. Mediates cilia and flagella polyglutamylation which is essential for their biogenesis and motility. Involved in respiratory motile cilia function through the regulation of beating asymmetry. Essential for sperm flagella biogenesis, motility and male fertility. Involved in KLF4 glutamylation which impedes its ubiquitination, thereby leading to somatic cell reprogramming, pluripotency maintenance and embryogenesis.</text>
</comment>
<comment type="catalytic activity">
    <reaction evidence="3">
        <text>(L-glutamyl)(n)-gamma-L-glutamyl-L-glutamyl-[protein] + L-glutamate + ATP = (L-glutamyl)(n+1)-gamma-L-glutamyl-L-glutamyl-[protein] + ADP + phosphate + H(+)</text>
        <dbReference type="Rhea" id="RHEA:60148"/>
        <dbReference type="Rhea" id="RHEA-COMP:15519"/>
        <dbReference type="Rhea" id="RHEA-COMP:15675"/>
        <dbReference type="ChEBI" id="CHEBI:15378"/>
        <dbReference type="ChEBI" id="CHEBI:29985"/>
        <dbReference type="ChEBI" id="CHEBI:30616"/>
        <dbReference type="ChEBI" id="CHEBI:43474"/>
        <dbReference type="ChEBI" id="CHEBI:143623"/>
        <dbReference type="ChEBI" id="CHEBI:456216"/>
    </reaction>
    <physiologicalReaction direction="left-to-right" evidence="3">
        <dbReference type="Rhea" id="RHEA:60149"/>
    </physiologicalReaction>
</comment>
<comment type="cofactor">
    <cofactor evidence="1">
        <name>Mg(2+)</name>
        <dbReference type="ChEBI" id="CHEBI:18420"/>
    </cofactor>
</comment>
<comment type="subunit">
    <text evidence="2 3">Part of the neuronal tubulin polyglutamylase complex which contains TPGS1, TPGS2, TTLL1, LRRC49 and NICN1. Interacts with PCM1, CSTPP1 and LRRC49.</text>
</comment>
<comment type="subcellular location">
    <subcellularLocation>
        <location evidence="3">Cytoplasm</location>
        <location evidence="3">Cytoskeleton</location>
    </subcellularLocation>
    <subcellularLocation>
        <location evidence="3">Cytoplasm</location>
        <location evidence="3">Cytoskeleton</location>
        <location evidence="3">Cilium basal body</location>
    </subcellularLocation>
    <subcellularLocation>
        <location evidence="3">Cytoplasm</location>
        <location evidence="3">Cytoskeleton</location>
        <location evidence="3">Cilium axoneme</location>
    </subcellularLocation>
    <subcellularLocation>
        <location evidence="3">Cell projection</location>
        <location evidence="3">Cilium</location>
        <location evidence="3">Flagellum</location>
    </subcellularLocation>
</comment>
<comment type="domain">
    <text evidence="1">Gln-144 is the main determinant for regioselectivity, which segregates between initiases and elongases in all tubulin--tyrosine ligase family. A glutamine residue at this position is found in elongases TTLL6, TTLL9, TTLL11, TTLL13, TTLL10 and favors glutamate-chain elongation, whereas an arginine residue is found in initiases TTLL2, TTLL4, TTLL5, TTLL3, TTLL8 and favors initiation.</text>
</comment>
<comment type="similarity">
    <text evidence="6">Belongs to the tubulin polyglutamylase family.</text>
</comment>
<sequence>MAGKVKWVTDIEKSVLINNFEKRGWVQVTENEDWNFYWMSVQTIRNVFSVETGYRLSDDQIVNHFPNHYELTRKDLMVKNIKRYRKELEKEGSPLAEKDESGKYLYLDFVPVTYMLPADYNLFVEEFRKSPSSTWIMKPCGKAQGKGIFLINKLSQIKKWSRDSKTSSFVTQSTKEAYVISLYINNPLLIGGRKFDLRLYVLVSTYRPLRCYMYKLGFCRFCTVKYTPSTSELDNMFVHLTNVAIQKHGEDYNHIHGGKWTVNNLRLYLESTRGKEVTSKLFDEIHWIIVQSLKAVAPVMNNDKHCFECYGYDIIIDDKLKPWLIEVNASPSLTSSTANDRILKYNLINDTLNIAVPNGEIPDCKWNKSPPKEVLGNYEILYDEELAQGDGAERELRSRPGQSLGPKGSRLRDAGRTVLTTWK</sequence>
<gene>
    <name type="primary">TTLL1</name>
</gene>
<keyword id="KW-0067">ATP-binding</keyword>
<keyword id="KW-0966">Cell projection</keyword>
<keyword id="KW-0969">Cilium</keyword>
<keyword id="KW-0963">Cytoplasm</keyword>
<keyword id="KW-0206">Cytoskeleton</keyword>
<keyword id="KW-0282">Flagellum</keyword>
<keyword id="KW-0436">Ligase</keyword>
<keyword id="KW-0460">Magnesium</keyword>
<keyword id="KW-0479">Metal-binding</keyword>
<keyword id="KW-0493">Microtubule</keyword>
<keyword id="KW-0547">Nucleotide-binding</keyword>
<keyword id="KW-1185">Reference proteome</keyword>